<name>YFCD_ECOL6</name>
<evidence type="ECO:0000250" key="1"/>
<evidence type="ECO:0000255" key="2">
    <source>
        <dbReference type="PROSITE-ProRule" id="PRU00794"/>
    </source>
</evidence>
<evidence type="ECO:0000305" key="3"/>
<comment type="cofactor">
    <cofactor evidence="1">
        <name>Mg(2+)</name>
        <dbReference type="ChEBI" id="CHEBI:18420"/>
    </cofactor>
</comment>
<comment type="similarity">
    <text evidence="3">Belongs to the Nudix hydrolase family.</text>
</comment>
<dbReference type="EC" id="3.6.-.-"/>
<dbReference type="EMBL" id="AE014075">
    <property type="protein sequence ID" value="AAN81296.1"/>
    <property type="molecule type" value="Genomic_DNA"/>
</dbReference>
<dbReference type="RefSeq" id="WP_000437935.1">
    <property type="nucleotide sequence ID" value="NZ_CP051263.1"/>
</dbReference>
<dbReference type="SMR" id="P65557"/>
<dbReference type="STRING" id="199310.c2842"/>
<dbReference type="GeneID" id="93774875"/>
<dbReference type="KEGG" id="ecc:c2842"/>
<dbReference type="eggNOG" id="COG1443">
    <property type="taxonomic scope" value="Bacteria"/>
</dbReference>
<dbReference type="HOGENOM" id="CLU_060552_3_0_6"/>
<dbReference type="BioCyc" id="ECOL199310:C2842-MONOMER"/>
<dbReference type="Proteomes" id="UP000001410">
    <property type="component" value="Chromosome"/>
</dbReference>
<dbReference type="GO" id="GO:0016817">
    <property type="term" value="F:hydrolase activity, acting on acid anhydrides"/>
    <property type="evidence" value="ECO:0007669"/>
    <property type="project" value="InterPro"/>
</dbReference>
<dbReference type="GO" id="GO:0046872">
    <property type="term" value="F:metal ion binding"/>
    <property type="evidence" value="ECO:0007669"/>
    <property type="project" value="UniProtKB-KW"/>
</dbReference>
<dbReference type="CDD" id="cd04697">
    <property type="entry name" value="NUDIX_Hydrolase"/>
    <property type="match status" value="1"/>
</dbReference>
<dbReference type="FunFam" id="3.90.79.10:FF:000007">
    <property type="entry name" value="NUDIX hydrolase YfcD"/>
    <property type="match status" value="1"/>
</dbReference>
<dbReference type="Gene3D" id="3.90.79.10">
    <property type="entry name" value="Nucleoside Triphosphate Pyrophosphohydrolase"/>
    <property type="match status" value="1"/>
</dbReference>
<dbReference type="InterPro" id="IPR015797">
    <property type="entry name" value="NUDIX_hydrolase-like_dom_sf"/>
</dbReference>
<dbReference type="InterPro" id="IPR000086">
    <property type="entry name" value="NUDIX_hydrolase_dom"/>
</dbReference>
<dbReference type="InterPro" id="IPR024195">
    <property type="entry name" value="NUDIX_hydrolase_YfcD_pred"/>
</dbReference>
<dbReference type="NCBIfam" id="NF011922">
    <property type="entry name" value="PRK15393.1"/>
    <property type="match status" value="1"/>
</dbReference>
<dbReference type="PANTHER" id="PTHR10885">
    <property type="entry name" value="ISOPENTENYL-DIPHOSPHATE DELTA-ISOMERASE"/>
    <property type="match status" value="1"/>
</dbReference>
<dbReference type="PANTHER" id="PTHR10885:SF0">
    <property type="entry name" value="ISOPENTENYL-DIPHOSPHATE DELTA-ISOMERASE"/>
    <property type="match status" value="1"/>
</dbReference>
<dbReference type="Pfam" id="PF00293">
    <property type="entry name" value="NUDIX"/>
    <property type="match status" value="1"/>
</dbReference>
<dbReference type="PIRSF" id="PIRSF017340">
    <property type="entry name" value="Nudix_hydro"/>
    <property type="match status" value="1"/>
</dbReference>
<dbReference type="SUPFAM" id="SSF55811">
    <property type="entry name" value="Nudix"/>
    <property type="match status" value="1"/>
</dbReference>
<dbReference type="PROSITE" id="PS51462">
    <property type="entry name" value="NUDIX"/>
    <property type="match status" value="1"/>
</dbReference>
<accession>P65557</accession>
<accession>P76494</accession>
<gene>
    <name type="primary">yfcD</name>
    <name type="ordered locus">c2842</name>
</gene>
<protein>
    <recommendedName>
        <fullName>Uncharacterized Nudix hydrolase YfcD</fullName>
        <ecNumber>3.6.-.-</ecNumber>
    </recommendedName>
</protein>
<keyword id="KW-0378">Hydrolase</keyword>
<keyword id="KW-0460">Magnesium</keyword>
<keyword id="KW-0479">Metal-binding</keyword>
<keyword id="KW-1185">Reference proteome</keyword>
<sequence length="180" mass="20376">MEQRRLASTEWVDIVNEENEVIAQASREQMRAQCLRHRATYIVVHDGMGKILVQRRTETKDFLPGMLDATAGGVVQADEQLLESARREAEEELGIAGVPFAEHGQFYFEDKNCRVWGALFSCVSHGPFALQEDEVSEVCWLTPEEITARCDEFTPDSLKALALWMKRNAKNEAVETETAE</sequence>
<proteinExistence type="inferred from homology"/>
<reference key="1">
    <citation type="journal article" date="2002" name="Proc. Natl. Acad. Sci. U.S.A.">
        <title>Extensive mosaic structure revealed by the complete genome sequence of uropathogenic Escherichia coli.</title>
        <authorList>
            <person name="Welch R.A."/>
            <person name="Burland V."/>
            <person name="Plunkett G. III"/>
            <person name="Redford P."/>
            <person name="Roesch P."/>
            <person name="Rasko D."/>
            <person name="Buckles E.L."/>
            <person name="Liou S.-R."/>
            <person name="Boutin A."/>
            <person name="Hackett J."/>
            <person name="Stroud D."/>
            <person name="Mayhew G.F."/>
            <person name="Rose D.J."/>
            <person name="Zhou S."/>
            <person name="Schwartz D.C."/>
            <person name="Perna N.T."/>
            <person name="Mobley H.L.T."/>
            <person name="Donnenberg M.S."/>
            <person name="Blattner F.R."/>
        </authorList>
    </citation>
    <scope>NUCLEOTIDE SEQUENCE [LARGE SCALE GENOMIC DNA]</scope>
    <source>
        <strain>CFT073 / ATCC 700928 / UPEC</strain>
    </source>
</reference>
<feature type="chain" id="PRO_0000057078" description="Uncharacterized Nudix hydrolase YfcD">
    <location>
        <begin position="1"/>
        <end position="180"/>
    </location>
</feature>
<feature type="domain" description="Nudix hydrolase" evidence="2">
    <location>
        <begin position="35"/>
        <end position="163"/>
    </location>
</feature>
<feature type="short sequence motif" description="Nudix box">
    <location>
        <begin position="72"/>
        <end position="94"/>
    </location>
</feature>
<feature type="binding site" evidence="1">
    <location>
        <position position="88"/>
    </location>
    <ligand>
        <name>Mg(2+)</name>
        <dbReference type="ChEBI" id="CHEBI:18420"/>
    </ligand>
</feature>
<feature type="binding site" evidence="1">
    <location>
        <position position="92"/>
    </location>
    <ligand>
        <name>Mg(2+)</name>
        <dbReference type="ChEBI" id="CHEBI:18420"/>
    </ligand>
</feature>
<organism>
    <name type="scientific">Escherichia coli O6:H1 (strain CFT073 / ATCC 700928 / UPEC)</name>
    <dbReference type="NCBI Taxonomy" id="199310"/>
    <lineage>
        <taxon>Bacteria</taxon>
        <taxon>Pseudomonadati</taxon>
        <taxon>Pseudomonadota</taxon>
        <taxon>Gammaproteobacteria</taxon>
        <taxon>Enterobacterales</taxon>
        <taxon>Enterobacteriaceae</taxon>
        <taxon>Escherichia</taxon>
    </lineage>
</organism>